<sequence length="394" mass="43804">SVGFKAGVKDYRLTYYTPDYETLATDILAAFRVTPQPGVPPEEAGAAVAAESSTGTWTTVWTDGLTSLDRYKGRCYHIEPVAGEENQYIAYVAYPLDLFEEGSVTNMFTSIVGNVFGFKALRALRLEDLRIPPAYSKTFQGPPHGIQVERDKLNKYGRPLLGCTIKPKLGLSAKNYGRAVYECLRGGLDFTKDDENVNSQPFMRWRDRFLFCAEAIYKAQAETGEIKGHYLNATAGTSEEMIKRAVCARELGVPIVMHDYLTGGFTANTSLAHYCRDNGLLLHIHRAMHAVIDRQRNHGIHFRVLAKALRMSGGDHIHSGTVVGKLEGERDVTLGFVDLLRDDFIEKDRSRGIYFTQDWVSMPGVLPVASGGIHVWHMPALTDIFGDDSVLQFG</sequence>
<proteinExistence type="inferred from homology"/>
<accession>Q05795</accession>
<reference key="1">
    <citation type="journal article" date="1991" name="Proc. Natl. Acad. Sci. U.S.A.">
        <title>Molecular evolutionary history of ancient aquatic angiosperms.</title>
        <authorList>
            <person name="Les D.H."/>
            <person name="Garvin D.K."/>
            <person name="Wimpee C.F."/>
        </authorList>
    </citation>
    <scope>NUCLEOTIDE SEQUENCE [GENOMIC DNA]</scope>
</reference>
<dbReference type="EC" id="4.1.1.39"/>
<dbReference type="EMBL" id="M77028">
    <property type="protein sequence ID" value="AAA84035.1"/>
    <property type="molecule type" value="Genomic_DNA"/>
</dbReference>
<dbReference type="SMR" id="Q05795"/>
<dbReference type="GO" id="GO:0009507">
    <property type="term" value="C:chloroplast"/>
    <property type="evidence" value="ECO:0007669"/>
    <property type="project" value="UniProtKB-SubCell"/>
</dbReference>
<dbReference type="GO" id="GO:0000287">
    <property type="term" value="F:magnesium ion binding"/>
    <property type="evidence" value="ECO:0007669"/>
    <property type="project" value="InterPro"/>
</dbReference>
<dbReference type="GO" id="GO:0004497">
    <property type="term" value="F:monooxygenase activity"/>
    <property type="evidence" value="ECO:0007669"/>
    <property type="project" value="UniProtKB-KW"/>
</dbReference>
<dbReference type="GO" id="GO:0016984">
    <property type="term" value="F:ribulose-bisphosphate carboxylase activity"/>
    <property type="evidence" value="ECO:0007669"/>
    <property type="project" value="UniProtKB-EC"/>
</dbReference>
<dbReference type="GO" id="GO:0009853">
    <property type="term" value="P:photorespiration"/>
    <property type="evidence" value="ECO:0007669"/>
    <property type="project" value="UniProtKB-KW"/>
</dbReference>
<dbReference type="GO" id="GO:0019253">
    <property type="term" value="P:reductive pentose-phosphate cycle"/>
    <property type="evidence" value="ECO:0007669"/>
    <property type="project" value="UniProtKB-KW"/>
</dbReference>
<dbReference type="FunFam" id="3.20.20.110:FF:000003">
    <property type="entry name" value="Ribulose bisphosphate carboxylase large chain"/>
    <property type="match status" value="1"/>
</dbReference>
<dbReference type="FunFam" id="3.30.70.150:FF:000001">
    <property type="entry name" value="Ribulose bisphosphate carboxylase large chain"/>
    <property type="match status" value="1"/>
</dbReference>
<dbReference type="Gene3D" id="3.20.20.110">
    <property type="entry name" value="Ribulose bisphosphate carboxylase, large subunit, C-terminal domain"/>
    <property type="match status" value="1"/>
</dbReference>
<dbReference type="Gene3D" id="3.30.70.150">
    <property type="entry name" value="RuBisCO large subunit, N-terminal domain"/>
    <property type="match status" value="1"/>
</dbReference>
<dbReference type="InterPro" id="IPR033966">
    <property type="entry name" value="RuBisCO"/>
</dbReference>
<dbReference type="InterPro" id="IPR020878">
    <property type="entry name" value="RuBisCo_large_chain_AS"/>
</dbReference>
<dbReference type="InterPro" id="IPR000685">
    <property type="entry name" value="RuBisCO_lsu_C"/>
</dbReference>
<dbReference type="InterPro" id="IPR036376">
    <property type="entry name" value="RuBisCO_lsu_C_sf"/>
</dbReference>
<dbReference type="InterPro" id="IPR017443">
    <property type="entry name" value="RuBisCO_lsu_fd_N"/>
</dbReference>
<dbReference type="InterPro" id="IPR036422">
    <property type="entry name" value="RuBisCO_lsu_N_sf"/>
</dbReference>
<dbReference type="NCBIfam" id="NF003252">
    <property type="entry name" value="PRK04208.1"/>
    <property type="match status" value="1"/>
</dbReference>
<dbReference type="PANTHER" id="PTHR42704">
    <property type="entry name" value="RIBULOSE BISPHOSPHATE CARBOXYLASE"/>
    <property type="match status" value="1"/>
</dbReference>
<dbReference type="PANTHER" id="PTHR42704:SF19">
    <property type="entry name" value="RIBULOSE BISPHOSPHATE CARBOXYLASE LARGE CHAIN"/>
    <property type="match status" value="1"/>
</dbReference>
<dbReference type="Pfam" id="PF00016">
    <property type="entry name" value="RuBisCO_large"/>
    <property type="match status" value="1"/>
</dbReference>
<dbReference type="Pfam" id="PF02788">
    <property type="entry name" value="RuBisCO_large_N"/>
    <property type="match status" value="1"/>
</dbReference>
<dbReference type="SFLD" id="SFLDS00014">
    <property type="entry name" value="RuBisCO"/>
    <property type="match status" value="1"/>
</dbReference>
<dbReference type="SFLD" id="SFLDG00301">
    <property type="entry name" value="RuBisCO-like_proteins"/>
    <property type="match status" value="1"/>
</dbReference>
<dbReference type="SUPFAM" id="SSF51649">
    <property type="entry name" value="RuBisCo, C-terminal domain"/>
    <property type="match status" value="1"/>
</dbReference>
<dbReference type="SUPFAM" id="SSF54966">
    <property type="entry name" value="RuBisCO, large subunit, small (N-terminal) domain"/>
    <property type="match status" value="1"/>
</dbReference>
<dbReference type="PROSITE" id="PS00157">
    <property type="entry name" value="RUBISCO_LARGE"/>
    <property type="match status" value="1"/>
</dbReference>
<organism>
    <name type="scientific">Barclaya longifolia</name>
    <name type="common">Orchid lily</name>
    <name type="synonym">Hydrostemma longifolium</name>
    <dbReference type="NCBI Taxonomy" id="4412"/>
    <lineage>
        <taxon>Eukaryota</taxon>
        <taxon>Viridiplantae</taxon>
        <taxon>Streptophyta</taxon>
        <taxon>Embryophyta</taxon>
        <taxon>Tracheophyta</taxon>
        <taxon>Spermatophyta</taxon>
        <taxon>Magnoliopsida</taxon>
        <taxon>Nymphaeales</taxon>
        <taxon>Nymphaeaceae</taxon>
        <taxon>Barclaya</taxon>
    </lineage>
</organism>
<gene>
    <name type="primary">rbcL</name>
</gene>
<geneLocation type="chloroplast"/>
<keyword id="KW-0113">Calvin cycle</keyword>
<keyword id="KW-0120">Carbon dioxide fixation</keyword>
<keyword id="KW-0150">Chloroplast</keyword>
<keyword id="KW-0456">Lyase</keyword>
<keyword id="KW-0460">Magnesium</keyword>
<keyword id="KW-0479">Metal-binding</keyword>
<keyword id="KW-0488">Methylation</keyword>
<keyword id="KW-0503">Monooxygenase</keyword>
<keyword id="KW-0560">Oxidoreductase</keyword>
<keyword id="KW-0601">Photorespiration</keyword>
<keyword id="KW-0602">Photosynthesis</keyword>
<keyword id="KW-0934">Plastid</keyword>
<protein>
    <recommendedName>
        <fullName>Ribulose bisphosphate carboxylase large chain</fullName>
        <shortName>RuBisCO large subunit</shortName>
        <ecNumber>4.1.1.39</ecNumber>
    </recommendedName>
</protein>
<evidence type="ECO:0000250" key="1"/>
<evidence type="ECO:0000255" key="2">
    <source>
        <dbReference type="PROSITE-ProRule" id="PRU10114"/>
    </source>
</evidence>
<evidence type="ECO:0000305" key="3"/>
<feature type="chain" id="PRO_0000062369" description="Ribulose bisphosphate carboxylase large chain">
    <location>
        <begin position="1" status="less than"/>
        <end position="394" status="greater than"/>
    </location>
</feature>
<feature type="active site" description="Proton acceptor" evidence="1">
    <location>
        <position position="166"/>
    </location>
</feature>
<feature type="active site" description="Proton acceptor" evidence="1">
    <location>
        <position position="285"/>
    </location>
</feature>
<feature type="binding site" description="in homodimeric partner" evidence="1">
    <location>
        <position position="114"/>
    </location>
    <ligand>
        <name>substrate</name>
    </ligand>
</feature>
<feature type="binding site" evidence="1">
    <location>
        <position position="164"/>
    </location>
    <ligand>
        <name>substrate</name>
    </ligand>
</feature>
<feature type="binding site" evidence="1">
    <location>
        <position position="168"/>
    </location>
    <ligand>
        <name>substrate</name>
    </ligand>
</feature>
<feature type="binding site" description="via carbamate group" evidence="2">
    <location>
        <position position="192"/>
    </location>
    <ligand>
        <name>Mg(2+)</name>
        <dbReference type="ChEBI" id="CHEBI:18420"/>
    </ligand>
</feature>
<feature type="binding site" evidence="2">
    <location>
        <position position="194"/>
    </location>
    <ligand>
        <name>Mg(2+)</name>
        <dbReference type="ChEBI" id="CHEBI:18420"/>
    </ligand>
</feature>
<feature type="binding site" evidence="2">
    <location>
        <position position="195"/>
    </location>
    <ligand>
        <name>Mg(2+)</name>
        <dbReference type="ChEBI" id="CHEBI:18420"/>
    </ligand>
</feature>
<feature type="binding site" evidence="1">
    <location>
        <position position="286"/>
    </location>
    <ligand>
        <name>substrate</name>
    </ligand>
</feature>
<feature type="binding site" evidence="1">
    <location>
        <position position="318"/>
    </location>
    <ligand>
        <name>substrate</name>
    </ligand>
</feature>
<feature type="binding site" evidence="1">
    <location>
        <position position="370"/>
    </location>
    <ligand>
        <name>substrate</name>
    </ligand>
</feature>
<feature type="site" description="Transition state stabilizer" evidence="1">
    <location>
        <position position="325"/>
    </location>
</feature>
<feature type="modified residue" description="N6,N6,N6-trimethyllysine" evidence="1">
    <location>
        <position position="5"/>
    </location>
</feature>
<feature type="modified residue" description="N6-carboxylysine" evidence="2">
    <location>
        <position position="192"/>
    </location>
</feature>
<feature type="non-terminal residue">
    <location>
        <position position="1"/>
    </location>
</feature>
<feature type="non-terminal residue">
    <location>
        <position position="394"/>
    </location>
</feature>
<name>RBL_BARLO</name>
<comment type="function">
    <text evidence="1">RuBisCO catalyzes two reactions: the carboxylation of D-ribulose 1,5-bisphosphate, the primary event in carbon dioxide fixation, as well as the oxidative fragmentation of the pentose substrate in the photorespiration process. Both reactions occur simultaneously and in competition at the same active site (By similarity).</text>
</comment>
<comment type="catalytic activity">
    <reaction>
        <text>2 (2R)-3-phosphoglycerate + 2 H(+) = D-ribulose 1,5-bisphosphate + CO2 + H2O</text>
        <dbReference type="Rhea" id="RHEA:23124"/>
        <dbReference type="ChEBI" id="CHEBI:15377"/>
        <dbReference type="ChEBI" id="CHEBI:15378"/>
        <dbReference type="ChEBI" id="CHEBI:16526"/>
        <dbReference type="ChEBI" id="CHEBI:57870"/>
        <dbReference type="ChEBI" id="CHEBI:58272"/>
        <dbReference type="EC" id="4.1.1.39"/>
    </reaction>
</comment>
<comment type="catalytic activity">
    <reaction>
        <text>D-ribulose 1,5-bisphosphate + O2 = 2-phosphoglycolate + (2R)-3-phosphoglycerate + 2 H(+)</text>
        <dbReference type="Rhea" id="RHEA:36631"/>
        <dbReference type="ChEBI" id="CHEBI:15378"/>
        <dbReference type="ChEBI" id="CHEBI:15379"/>
        <dbReference type="ChEBI" id="CHEBI:57870"/>
        <dbReference type="ChEBI" id="CHEBI:58033"/>
        <dbReference type="ChEBI" id="CHEBI:58272"/>
    </reaction>
</comment>
<comment type="cofactor">
    <cofactor evidence="1">
        <name>Mg(2+)</name>
        <dbReference type="ChEBI" id="CHEBI:18420"/>
    </cofactor>
    <text evidence="1">Binds 1 Mg(2+) ion per subunit.</text>
</comment>
<comment type="subunit">
    <text evidence="1">Heterohexadecamer of 8 large chains and 8 small chains.</text>
</comment>
<comment type="subcellular location">
    <subcellularLocation>
        <location>Plastid</location>
        <location>Chloroplast</location>
    </subcellularLocation>
</comment>
<comment type="miscellaneous">
    <text evidence="1">The basic functional RuBisCO is composed of a large chain homodimer in a 'head-to-tail' conformation. In form I RuBisCO this homodimer is arranged in a barrel-like tetramer with the small subunits forming a tetrameric 'cap' on each end of the 'barrel' (By similarity).</text>
</comment>
<comment type="similarity">
    <text evidence="3">Belongs to the RuBisCO large chain family. Type I subfamily.</text>
</comment>